<protein>
    <recommendedName>
        <fullName>F-actin-capping protein subunit beta</fullName>
    </recommendedName>
</protein>
<accession>Q4WKB4</accession>
<evidence type="ECO:0000250" key="1"/>
<evidence type="ECO:0000250" key="2">
    <source>
        <dbReference type="UniProtKB" id="P13517"/>
    </source>
</evidence>
<evidence type="ECO:0000250" key="3">
    <source>
        <dbReference type="UniProtKB" id="Q9HGP5"/>
    </source>
</evidence>
<evidence type="ECO:0000305" key="4"/>
<keyword id="KW-0117">Actin capping</keyword>
<keyword id="KW-0009">Actin-binding</keyword>
<keyword id="KW-0963">Cytoplasm</keyword>
<keyword id="KW-0206">Cytoskeleton</keyword>
<keyword id="KW-1185">Reference proteome</keyword>
<comment type="function">
    <text evidence="1">F-actin-capping proteins bind in a Ca(2+)-independent manner to the fast growing ends of actin filaments (barbed end) thereby blocking the exchange of subunits at these ends. Unlike other capping proteins (such as gelsolin and severin), these proteins do not sever actin filaments (By similarity).</text>
</comment>
<comment type="subunit">
    <text evidence="2">Component of the F-actin capping complex, composed of a heterodimer of an alpha and a beta subunit.</text>
</comment>
<comment type="subcellular location">
    <subcellularLocation>
        <location evidence="2">Cytoplasm</location>
        <location evidence="2">Cytoskeleton</location>
        <location evidence="2">Actin patch</location>
    </subcellularLocation>
    <subcellularLocation>
        <location evidence="3">Cytoplasm</location>
        <location evidence="3">Cytoskeleton</location>
    </subcellularLocation>
</comment>
<comment type="similarity">
    <text evidence="4">Belongs to the F-actin-capping protein beta subunit family.</text>
</comment>
<dbReference type="EMBL" id="AAHF01000007">
    <property type="protein sequence ID" value="EAL88018.1"/>
    <property type="molecule type" value="Genomic_DNA"/>
</dbReference>
<dbReference type="RefSeq" id="XP_750056.1">
    <property type="nucleotide sequence ID" value="XM_744963.1"/>
</dbReference>
<dbReference type="SMR" id="Q4WKB4"/>
<dbReference type="FunCoup" id="Q4WKB4">
    <property type="interactions" value="879"/>
</dbReference>
<dbReference type="STRING" id="330879.Q4WKB4"/>
<dbReference type="EnsemblFungi" id="EAL88018">
    <property type="protein sequence ID" value="EAL88018"/>
    <property type="gene ID" value="AFUA_1G03060"/>
</dbReference>
<dbReference type="GeneID" id="3507861"/>
<dbReference type="KEGG" id="afm:AFUA_1G03060"/>
<dbReference type="VEuPathDB" id="FungiDB:Afu1g03060"/>
<dbReference type="eggNOG" id="KOG3174">
    <property type="taxonomic scope" value="Eukaryota"/>
</dbReference>
<dbReference type="HOGENOM" id="CLU_045864_1_0_1"/>
<dbReference type="InParanoid" id="Q4WKB4"/>
<dbReference type="OMA" id="WSNKYYP"/>
<dbReference type="OrthoDB" id="9979678at2759"/>
<dbReference type="Proteomes" id="UP000002530">
    <property type="component" value="Chromosome 1"/>
</dbReference>
<dbReference type="GO" id="GO:0099079">
    <property type="term" value="C:actin body"/>
    <property type="evidence" value="ECO:0007669"/>
    <property type="project" value="EnsemblFungi"/>
</dbReference>
<dbReference type="GO" id="GO:0030479">
    <property type="term" value="C:actin cortical patch"/>
    <property type="evidence" value="ECO:0000318"/>
    <property type="project" value="GO_Central"/>
</dbReference>
<dbReference type="GO" id="GO:0000142">
    <property type="term" value="C:cellular bud neck contractile ring"/>
    <property type="evidence" value="ECO:0007669"/>
    <property type="project" value="EnsemblFungi"/>
</dbReference>
<dbReference type="GO" id="GO:0005934">
    <property type="term" value="C:cellular bud tip"/>
    <property type="evidence" value="ECO:0007669"/>
    <property type="project" value="EnsemblFungi"/>
</dbReference>
<dbReference type="GO" id="GO:0008290">
    <property type="term" value="C:F-actin capping protein complex"/>
    <property type="evidence" value="ECO:0000318"/>
    <property type="project" value="GO_Central"/>
</dbReference>
<dbReference type="GO" id="GO:0000131">
    <property type="term" value="C:incipient cellular bud site"/>
    <property type="evidence" value="ECO:0007669"/>
    <property type="project" value="EnsemblFungi"/>
</dbReference>
<dbReference type="GO" id="GO:0043332">
    <property type="term" value="C:mating projection tip"/>
    <property type="evidence" value="ECO:0007669"/>
    <property type="project" value="EnsemblFungi"/>
</dbReference>
<dbReference type="GO" id="GO:0031097">
    <property type="term" value="C:medial cortex"/>
    <property type="evidence" value="ECO:0007669"/>
    <property type="project" value="EnsemblFungi"/>
</dbReference>
<dbReference type="GO" id="GO:0005634">
    <property type="term" value="C:nucleus"/>
    <property type="evidence" value="ECO:0007669"/>
    <property type="project" value="EnsemblFungi"/>
</dbReference>
<dbReference type="GO" id="GO:0051015">
    <property type="term" value="F:actin filament binding"/>
    <property type="evidence" value="ECO:0000318"/>
    <property type="project" value="GO_Central"/>
</dbReference>
<dbReference type="GO" id="GO:0044396">
    <property type="term" value="P:actin cortical patch organization"/>
    <property type="evidence" value="ECO:0007669"/>
    <property type="project" value="EnsemblFungi"/>
</dbReference>
<dbReference type="GO" id="GO:0051016">
    <property type="term" value="P:barbed-end actin filament capping"/>
    <property type="evidence" value="ECO:0000318"/>
    <property type="project" value="GO_Central"/>
</dbReference>
<dbReference type="GO" id="GO:0000902">
    <property type="term" value="P:cell morphogenesis"/>
    <property type="evidence" value="ECO:0000318"/>
    <property type="project" value="GO_Central"/>
</dbReference>
<dbReference type="GO" id="GO:0030447">
    <property type="term" value="P:filamentous growth"/>
    <property type="evidence" value="ECO:0007669"/>
    <property type="project" value="EnsemblFungi"/>
</dbReference>
<dbReference type="GO" id="GO:1904600">
    <property type="term" value="P:mating projection actin fusion focus assembly"/>
    <property type="evidence" value="ECO:0007669"/>
    <property type="project" value="EnsemblFungi"/>
</dbReference>
<dbReference type="GO" id="GO:1903475">
    <property type="term" value="P:mitotic actomyosin contractile ring assembly"/>
    <property type="evidence" value="ECO:0007669"/>
    <property type="project" value="EnsemblFungi"/>
</dbReference>
<dbReference type="GO" id="GO:1902404">
    <property type="term" value="P:mitotic actomyosin contractile ring contraction"/>
    <property type="evidence" value="ECO:0007669"/>
    <property type="project" value="EnsemblFungi"/>
</dbReference>
<dbReference type="FunFam" id="1.20.58.570:FF:000001">
    <property type="entry name" value="F-actin-capping protein subunit beta"/>
    <property type="match status" value="1"/>
</dbReference>
<dbReference type="FunFam" id="3.90.1150.210:FF:000005">
    <property type="entry name" value="F-actin-capping protein subunit beta"/>
    <property type="match status" value="1"/>
</dbReference>
<dbReference type="Gene3D" id="1.20.58.570">
    <property type="match status" value="1"/>
</dbReference>
<dbReference type="Gene3D" id="3.90.1150.210">
    <property type="entry name" value="F-actin capping protein, beta subunit"/>
    <property type="match status" value="1"/>
</dbReference>
<dbReference type="InterPro" id="IPR037282">
    <property type="entry name" value="CapZ_alpha/beta"/>
</dbReference>
<dbReference type="InterPro" id="IPR042276">
    <property type="entry name" value="CapZ_alpha/beta_2"/>
</dbReference>
<dbReference type="InterPro" id="IPR001698">
    <property type="entry name" value="CAPZB"/>
</dbReference>
<dbReference type="InterPro" id="IPR043175">
    <property type="entry name" value="CAPZB_N"/>
</dbReference>
<dbReference type="InterPro" id="IPR019771">
    <property type="entry name" value="F-actin_capping_bsu_CS"/>
</dbReference>
<dbReference type="PANTHER" id="PTHR10619">
    <property type="entry name" value="F-ACTIN-CAPPING PROTEIN SUBUNIT BETA"/>
    <property type="match status" value="1"/>
</dbReference>
<dbReference type="PANTHER" id="PTHR10619:SF0">
    <property type="entry name" value="F-ACTIN-CAPPING PROTEIN SUBUNIT BETA ISOFORMS 1 AND 2"/>
    <property type="match status" value="1"/>
</dbReference>
<dbReference type="Pfam" id="PF01115">
    <property type="entry name" value="F_actin_cap_B"/>
    <property type="match status" value="1"/>
</dbReference>
<dbReference type="PRINTS" id="PR00192">
    <property type="entry name" value="FACTINCAPB"/>
</dbReference>
<dbReference type="SUPFAM" id="SSF90096">
    <property type="entry name" value="Subunits of heterodimeric actin filament capping protein Capz"/>
    <property type="match status" value="1"/>
</dbReference>
<dbReference type="PROSITE" id="PS00231">
    <property type="entry name" value="F_ACTIN_CAPPING_BETA"/>
    <property type="match status" value="1"/>
</dbReference>
<organism>
    <name type="scientific">Aspergillus fumigatus (strain ATCC MYA-4609 / CBS 101355 / FGSC A1100 / Af293)</name>
    <name type="common">Neosartorya fumigata</name>
    <dbReference type="NCBI Taxonomy" id="330879"/>
    <lineage>
        <taxon>Eukaryota</taxon>
        <taxon>Fungi</taxon>
        <taxon>Dikarya</taxon>
        <taxon>Ascomycota</taxon>
        <taxon>Pezizomycotina</taxon>
        <taxon>Eurotiomycetes</taxon>
        <taxon>Eurotiomycetidae</taxon>
        <taxon>Eurotiales</taxon>
        <taxon>Aspergillaceae</taxon>
        <taxon>Aspergillus</taxon>
        <taxon>Aspergillus subgen. Fumigati</taxon>
    </lineage>
</organism>
<sequence length="322" mass="36387">MPPPLSPRARTLVGQVKRNVQFHVELHQYNTNPTPHTMADIQFDSALDLLRRLNPRDTKQNLQAITSIVPDLTEDLLSSVDQPLEIRRCPKTNRDYLLCDYNRDGDSYRSPWSNEFDPPLEDGTVPSERVRKLEVAANEAFDVYRELYYEGGVGSVYFWDLDDGFAGVILLKKGVTPGAKSSGEWDSIHVFEATDRARMSHYKLTSTVILHLANENEALGEMDLSGNMTRQMEVDLPVESDASHVANVGRLVEDMELKMRNLLQEVYFGKAKDVVGELRSKPLLCHGRTKAMDADKNTGLAPLSETNKEKAAHLEMIRSMQR</sequence>
<feature type="chain" id="PRO_0000256835" description="F-actin-capping protein subunit beta">
    <location>
        <begin position="1"/>
        <end position="322"/>
    </location>
</feature>
<proteinExistence type="inferred from homology"/>
<gene>
    <name type="primary">cap2</name>
    <name type="ORF">AFUA_1G03060</name>
</gene>
<name>CAPZB_ASPFU</name>
<reference key="1">
    <citation type="journal article" date="2005" name="Nature">
        <title>Genomic sequence of the pathogenic and allergenic filamentous fungus Aspergillus fumigatus.</title>
        <authorList>
            <person name="Nierman W.C."/>
            <person name="Pain A."/>
            <person name="Anderson M.J."/>
            <person name="Wortman J.R."/>
            <person name="Kim H.S."/>
            <person name="Arroyo J."/>
            <person name="Berriman M."/>
            <person name="Abe K."/>
            <person name="Archer D.B."/>
            <person name="Bermejo C."/>
            <person name="Bennett J.W."/>
            <person name="Bowyer P."/>
            <person name="Chen D."/>
            <person name="Collins M."/>
            <person name="Coulsen R."/>
            <person name="Davies R."/>
            <person name="Dyer P.S."/>
            <person name="Farman M.L."/>
            <person name="Fedorova N."/>
            <person name="Fedorova N.D."/>
            <person name="Feldblyum T.V."/>
            <person name="Fischer R."/>
            <person name="Fosker N."/>
            <person name="Fraser A."/>
            <person name="Garcia J.L."/>
            <person name="Garcia M.J."/>
            <person name="Goble A."/>
            <person name="Goldman G.H."/>
            <person name="Gomi K."/>
            <person name="Griffith-Jones S."/>
            <person name="Gwilliam R."/>
            <person name="Haas B.J."/>
            <person name="Haas H."/>
            <person name="Harris D.E."/>
            <person name="Horiuchi H."/>
            <person name="Huang J."/>
            <person name="Humphray S."/>
            <person name="Jimenez J."/>
            <person name="Keller N."/>
            <person name="Khouri H."/>
            <person name="Kitamoto K."/>
            <person name="Kobayashi T."/>
            <person name="Konzack S."/>
            <person name="Kulkarni R."/>
            <person name="Kumagai T."/>
            <person name="Lafton A."/>
            <person name="Latge J.-P."/>
            <person name="Li W."/>
            <person name="Lord A."/>
            <person name="Lu C."/>
            <person name="Majoros W.H."/>
            <person name="May G.S."/>
            <person name="Miller B.L."/>
            <person name="Mohamoud Y."/>
            <person name="Molina M."/>
            <person name="Monod M."/>
            <person name="Mouyna I."/>
            <person name="Mulligan S."/>
            <person name="Murphy L.D."/>
            <person name="O'Neil S."/>
            <person name="Paulsen I."/>
            <person name="Penalva M.A."/>
            <person name="Pertea M."/>
            <person name="Price C."/>
            <person name="Pritchard B.L."/>
            <person name="Quail M.A."/>
            <person name="Rabbinowitsch E."/>
            <person name="Rawlins N."/>
            <person name="Rajandream M.A."/>
            <person name="Reichard U."/>
            <person name="Renauld H."/>
            <person name="Robson G.D."/>
            <person name="Rodriguez de Cordoba S."/>
            <person name="Rodriguez-Pena J.M."/>
            <person name="Ronning C.M."/>
            <person name="Rutter S."/>
            <person name="Salzberg S.L."/>
            <person name="Sanchez M."/>
            <person name="Sanchez-Ferrero J.C."/>
            <person name="Saunders D."/>
            <person name="Seeger K."/>
            <person name="Squares R."/>
            <person name="Squares S."/>
            <person name="Takeuchi M."/>
            <person name="Tekaia F."/>
            <person name="Turner G."/>
            <person name="Vazquez de Aldana C.R."/>
            <person name="Weidman J."/>
            <person name="White O."/>
            <person name="Woodward J.R."/>
            <person name="Yu J.-H."/>
            <person name="Fraser C.M."/>
            <person name="Galagan J.E."/>
            <person name="Asai K."/>
            <person name="Machida M."/>
            <person name="Hall N."/>
            <person name="Barrell B.G."/>
            <person name="Denning D.W."/>
        </authorList>
    </citation>
    <scope>NUCLEOTIDE SEQUENCE [LARGE SCALE GENOMIC DNA]</scope>
    <source>
        <strain>ATCC MYA-4609 / CBS 101355 / FGSC A1100 / Af293</strain>
    </source>
</reference>